<organism>
    <name type="scientific">Methylobacillus flagellatus (strain ATCC 51484 / DSM 6875 / VKM B-1610 / KT)</name>
    <dbReference type="NCBI Taxonomy" id="265072"/>
    <lineage>
        <taxon>Bacteria</taxon>
        <taxon>Pseudomonadati</taxon>
        <taxon>Pseudomonadota</taxon>
        <taxon>Betaproteobacteria</taxon>
        <taxon>Nitrosomonadales</taxon>
        <taxon>Methylophilaceae</taxon>
        <taxon>Methylobacillus</taxon>
    </lineage>
</organism>
<name>ATPF_METFK</name>
<accession>Q1GXM6</accession>
<evidence type="ECO:0000255" key="1">
    <source>
        <dbReference type="HAMAP-Rule" id="MF_01398"/>
    </source>
</evidence>
<gene>
    <name evidence="1" type="primary">atpF</name>
    <name type="ordered locus">Mfla_2748</name>
</gene>
<comment type="function">
    <text evidence="1">F(1)F(0) ATP synthase produces ATP from ADP in the presence of a proton or sodium gradient. F-type ATPases consist of two structural domains, F(1) containing the extramembraneous catalytic core and F(0) containing the membrane proton channel, linked together by a central stalk and a peripheral stalk. During catalysis, ATP synthesis in the catalytic domain of F(1) is coupled via a rotary mechanism of the central stalk subunits to proton translocation.</text>
</comment>
<comment type="function">
    <text evidence="1">Component of the F(0) channel, it forms part of the peripheral stalk, linking F(1) to F(0).</text>
</comment>
<comment type="subunit">
    <text evidence="1">F-type ATPases have 2 components, F(1) - the catalytic core - and F(0) - the membrane proton channel. F(1) has five subunits: alpha(3), beta(3), gamma(1), delta(1), epsilon(1). F(0) has three main subunits: a(1), b(2) and c(10-14). The alpha and beta chains form an alternating ring which encloses part of the gamma chain. F(1) is attached to F(0) by a central stalk formed by the gamma and epsilon chains, while a peripheral stalk is formed by the delta and b chains.</text>
</comment>
<comment type="subcellular location">
    <subcellularLocation>
        <location evidence="1">Cell inner membrane</location>
        <topology evidence="1">Single-pass membrane protein</topology>
    </subcellularLocation>
</comment>
<comment type="similarity">
    <text evidence="1">Belongs to the ATPase B chain family.</text>
</comment>
<sequence length="156" mass="16951">MNINLTLIAQAISFAILIWFTTKFVWPYLLNAIETRQKTIADGLAAAERGKQELDMATQRSAEVVNDAKQKATSIIAQAEKRASEIVEEAKANAKAEGDRIIAGAKAEIDQEVNRAKEGLRQQVSALAVAGAEKILRKEIDAKAHADLLNAIANEL</sequence>
<dbReference type="EMBL" id="CP000284">
    <property type="protein sequence ID" value="ABE51011.1"/>
    <property type="molecule type" value="Genomic_DNA"/>
</dbReference>
<dbReference type="RefSeq" id="WP_011480964.1">
    <property type="nucleotide sequence ID" value="NC_007947.1"/>
</dbReference>
<dbReference type="SMR" id="Q1GXM6"/>
<dbReference type="STRING" id="265072.Mfla_2748"/>
<dbReference type="KEGG" id="mfa:Mfla_2748"/>
<dbReference type="eggNOG" id="COG0711">
    <property type="taxonomic scope" value="Bacteria"/>
</dbReference>
<dbReference type="HOGENOM" id="CLU_079215_4_5_4"/>
<dbReference type="OrthoDB" id="9788020at2"/>
<dbReference type="Proteomes" id="UP000002440">
    <property type="component" value="Chromosome"/>
</dbReference>
<dbReference type="GO" id="GO:0005886">
    <property type="term" value="C:plasma membrane"/>
    <property type="evidence" value="ECO:0007669"/>
    <property type="project" value="UniProtKB-SubCell"/>
</dbReference>
<dbReference type="GO" id="GO:0045259">
    <property type="term" value="C:proton-transporting ATP synthase complex"/>
    <property type="evidence" value="ECO:0007669"/>
    <property type="project" value="UniProtKB-KW"/>
</dbReference>
<dbReference type="GO" id="GO:0046933">
    <property type="term" value="F:proton-transporting ATP synthase activity, rotational mechanism"/>
    <property type="evidence" value="ECO:0007669"/>
    <property type="project" value="UniProtKB-UniRule"/>
</dbReference>
<dbReference type="GO" id="GO:0046961">
    <property type="term" value="F:proton-transporting ATPase activity, rotational mechanism"/>
    <property type="evidence" value="ECO:0007669"/>
    <property type="project" value="TreeGrafter"/>
</dbReference>
<dbReference type="CDD" id="cd06503">
    <property type="entry name" value="ATP-synt_Fo_b"/>
    <property type="match status" value="1"/>
</dbReference>
<dbReference type="FunFam" id="1.20.5.620:FF:000001">
    <property type="entry name" value="ATP synthase subunit b"/>
    <property type="match status" value="1"/>
</dbReference>
<dbReference type="Gene3D" id="1.20.5.620">
    <property type="entry name" value="F1F0 ATP synthase subunit B, membrane domain"/>
    <property type="match status" value="1"/>
</dbReference>
<dbReference type="HAMAP" id="MF_01398">
    <property type="entry name" value="ATP_synth_b_bprime"/>
    <property type="match status" value="1"/>
</dbReference>
<dbReference type="InterPro" id="IPR028987">
    <property type="entry name" value="ATP_synth_B-like_membr_sf"/>
</dbReference>
<dbReference type="InterPro" id="IPR002146">
    <property type="entry name" value="ATP_synth_b/b'su_bac/chlpt"/>
</dbReference>
<dbReference type="InterPro" id="IPR005864">
    <property type="entry name" value="ATP_synth_F0_bsu_bac"/>
</dbReference>
<dbReference type="InterPro" id="IPR050059">
    <property type="entry name" value="ATP_synthase_B_chain"/>
</dbReference>
<dbReference type="NCBIfam" id="TIGR01144">
    <property type="entry name" value="ATP_synt_b"/>
    <property type="match status" value="1"/>
</dbReference>
<dbReference type="NCBIfam" id="NF004411">
    <property type="entry name" value="PRK05759.1-2"/>
    <property type="match status" value="1"/>
</dbReference>
<dbReference type="PANTHER" id="PTHR33445:SF1">
    <property type="entry name" value="ATP SYNTHASE SUBUNIT B"/>
    <property type="match status" value="1"/>
</dbReference>
<dbReference type="PANTHER" id="PTHR33445">
    <property type="entry name" value="ATP SYNTHASE SUBUNIT B', CHLOROPLASTIC"/>
    <property type="match status" value="1"/>
</dbReference>
<dbReference type="Pfam" id="PF00430">
    <property type="entry name" value="ATP-synt_B"/>
    <property type="match status" value="1"/>
</dbReference>
<dbReference type="SUPFAM" id="SSF81573">
    <property type="entry name" value="F1F0 ATP synthase subunit B, membrane domain"/>
    <property type="match status" value="1"/>
</dbReference>
<protein>
    <recommendedName>
        <fullName evidence="1">ATP synthase subunit b</fullName>
    </recommendedName>
    <alternativeName>
        <fullName evidence="1">ATP synthase F(0) sector subunit b</fullName>
    </alternativeName>
    <alternativeName>
        <fullName evidence="1">ATPase subunit I</fullName>
    </alternativeName>
    <alternativeName>
        <fullName evidence="1">F-type ATPase subunit b</fullName>
        <shortName evidence="1">F-ATPase subunit b</shortName>
    </alternativeName>
</protein>
<reference key="1">
    <citation type="submission" date="2006-03" db="EMBL/GenBank/DDBJ databases">
        <title>Complete sequence of Methylobacillus flagellatus KT.</title>
        <authorList>
            <consortium name="US DOE Joint Genome Institute"/>
            <person name="Copeland A."/>
            <person name="Lucas S."/>
            <person name="Lapidus A."/>
            <person name="Barry K."/>
            <person name="Detter J.C."/>
            <person name="Glavina del Rio T."/>
            <person name="Hammon N."/>
            <person name="Israni S."/>
            <person name="Dalin E."/>
            <person name="Tice H."/>
            <person name="Pitluck S."/>
            <person name="Brettin T."/>
            <person name="Bruce D."/>
            <person name="Han C."/>
            <person name="Tapia R."/>
            <person name="Saunders E."/>
            <person name="Gilna P."/>
            <person name="Schmutz J."/>
            <person name="Larimer F."/>
            <person name="Land M."/>
            <person name="Kyrpides N."/>
            <person name="Anderson I."/>
            <person name="Richardson P."/>
        </authorList>
    </citation>
    <scope>NUCLEOTIDE SEQUENCE [LARGE SCALE GENOMIC DNA]</scope>
    <source>
        <strain>ATCC 51484 / DSM 6875 / VKM B-1610 / KT</strain>
    </source>
</reference>
<proteinExistence type="inferred from homology"/>
<keyword id="KW-0066">ATP synthesis</keyword>
<keyword id="KW-0997">Cell inner membrane</keyword>
<keyword id="KW-1003">Cell membrane</keyword>
<keyword id="KW-0138">CF(0)</keyword>
<keyword id="KW-0375">Hydrogen ion transport</keyword>
<keyword id="KW-0406">Ion transport</keyword>
<keyword id="KW-0472">Membrane</keyword>
<keyword id="KW-1185">Reference proteome</keyword>
<keyword id="KW-0812">Transmembrane</keyword>
<keyword id="KW-1133">Transmembrane helix</keyword>
<keyword id="KW-0813">Transport</keyword>
<feature type="chain" id="PRO_0000368584" description="ATP synthase subunit b">
    <location>
        <begin position="1"/>
        <end position="156"/>
    </location>
</feature>
<feature type="transmembrane region" description="Helical" evidence="1">
    <location>
        <begin position="7"/>
        <end position="29"/>
    </location>
</feature>